<sequence>MSRESERYWTLVHALIDRGVVSREQWQMVDPAQYQFYHRSKQRGFKVRHILRDVIRHMCWSRTLLDYMSSASTPSPDDVLRNPLYQLLLCNGYNPAVVGTALIRWAGHQSNRNTVWIRGTPMSGAPYLAQAIAYCSPLVGSVDWRNKSNPFEGCPDSLVFWWDGGYVYDCCVGLVKQVFRGEHVILPPEGLRGPNPCSELFRTPVLMYSQADICMTRLRSGELSAEHAVGLRDCMYLIRLTEDFDCAGGISCADVKQFVAWSREHPGEVRETHELK</sequence>
<keyword id="KW-1185">Reference proteome</keyword>
<name>YO2_ADEG1</name>
<gene>
    <name type="ORF">2</name>
</gene>
<feature type="chain" id="PRO_0000338995" description="Uncharacterized protein ORF2">
    <location>
        <begin position="1"/>
        <end position="276"/>
    </location>
</feature>
<reference key="1">
    <citation type="journal article" date="1996" name="J. Virol.">
        <title>The complete DNA sequence and genomic organization of the avian adenovirus CELO.</title>
        <authorList>
            <person name="Chiocca S."/>
            <person name="Kurzbauer R."/>
            <person name="Schaffner G."/>
            <person name="Baker A."/>
            <person name="Mautner V."/>
            <person name="Cotten M."/>
        </authorList>
    </citation>
    <scope>NUCLEOTIDE SEQUENCE [GENOMIC DNA]</scope>
</reference>
<reference key="2">
    <citation type="journal article" date="1992" name="Mol. Genet. Microbiol. Virol.">
        <title>Nucleotide seq. analysis of the avian adenovirus CELO (FAV1) DNA fragment (92-100%).</title>
        <authorList>
            <person name="Akopian T.A."/>
            <person name="Kaverina E.N."/>
            <person name="Naroditsky B.S."/>
            <person name="Tikhonenko T.I."/>
        </authorList>
    </citation>
    <scope>NUCLEOTIDE SEQUENCE [LARGE SCALE GENOMIC DNA]</scope>
</reference>
<organism>
    <name type="scientific">Fowl adenovirus A serotype 1 (strain CELO / Phelps)</name>
    <name type="common">FAdV-1</name>
    <name type="synonym">Avian adenovirus gal1 (strain Phelps)</name>
    <dbReference type="NCBI Taxonomy" id="10553"/>
    <lineage>
        <taxon>Viruses</taxon>
        <taxon>Varidnaviria</taxon>
        <taxon>Bamfordvirae</taxon>
        <taxon>Preplasmiviricota</taxon>
        <taxon>Tectiliviricetes</taxon>
        <taxon>Rowavirales</taxon>
        <taxon>Adenoviridae</taxon>
        <taxon>Aviadenovirus</taxon>
        <taxon>Fowl aviadenovirus A</taxon>
    </lineage>
</organism>
<protein>
    <recommendedName>
        <fullName>Uncharacterized protein ORF2</fullName>
    </recommendedName>
</protein>
<organismHost>
    <name type="scientific">Galliformes</name>
    <dbReference type="NCBI Taxonomy" id="8976"/>
</organismHost>
<proteinExistence type="predicted"/>
<dbReference type="EMBL" id="U46933">
    <property type="protein sequence ID" value="AAC54897.1"/>
    <property type="molecule type" value="Genomic_DNA"/>
</dbReference>
<dbReference type="EMBL" id="S61107">
    <property type="protein sequence ID" value="AAB26433.1"/>
    <property type="molecule type" value="Genomic_DNA"/>
</dbReference>
<dbReference type="EMBL" id="Z17216">
    <property type="protein sequence ID" value="CAA78920.1"/>
    <property type="molecule type" value="Genomic_DNA"/>
</dbReference>
<dbReference type="PIR" id="S26428">
    <property type="entry name" value="S26428"/>
</dbReference>
<dbReference type="RefSeq" id="NP_043871.1">
    <property type="nucleotide sequence ID" value="NC_001720.1"/>
</dbReference>
<dbReference type="SMR" id="Q89621"/>
<dbReference type="KEGG" id="vg:1733473"/>
<dbReference type="Proteomes" id="UP000001594">
    <property type="component" value="Segment"/>
</dbReference>
<dbReference type="GO" id="GO:0019079">
    <property type="term" value="P:viral genome replication"/>
    <property type="evidence" value="ECO:0007669"/>
    <property type="project" value="InterPro"/>
</dbReference>
<dbReference type="Gene3D" id="3.40.50.300">
    <property type="entry name" value="P-loop containing nucleotide triphosphate hydrolases"/>
    <property type="match status" value="1"/>
</dbReference>
<dbReference type="InterPro" id="IPR027417">
    <property type="entry name" value="P-loop_NTPase"/>
</dbReference>
<dbReference type="InterPro" id="IPR001257">
    <property type="entry name" value="Parvovirus_NS1_helicase"/>
</dbReference>
<dbReference type="Pfam" id="PF01057">
    <property type="entry name" value="Parvo_NS1"/>
    <property type="match status" value="1"/>
</dbReference>
<dbReference type="SUPFAM" id="SSF52540">
    <property type="entry name" value="P-loop containing nucleoside triphosphate hydrolases"/>
    <property type="match status" value="1"/>
</dbReference>
<accession>Q89621</accession>
<accession>Q76UU7</accession>